<name>PAX_I97A0</name>
<gene>
    <name type="primary">PA</name>
</gene>
<organismHost>
    <name type="scientific">Aves</name>
    <dbReference type="NCBI Taxonomy" id="8782"/>
</organismHost>
<organismHost>
    <name type="scientific">Felis catus</name>
    <name type="common">Cat</name>
    <name type="synonym">Felis silvestris catus</name>
    <dbReference type="NCBI Taxonomy" id="9685"/>
</organismHost>
<organismHost>
    <name type="scientific">Homo sapiens</name>
    <name type="common">Human</name>
    <dbReference type="NCBI Taxonomy" id="9606"/>
</organismHost>
<organismHost>
    <name type="scientific">Panthera pardus</name>
    <name type="common">Leopard</name>
    <name type="synonym">Felis pardus</name>
    <dbReference type="NCBI Taxonomy" id="9691"/>
</organismHost>
<organismHost>
    <name type="scientific">Panthera tigris</name>
    <name type="common">Tiger</name>
    <dbReference type="NCBI Taxonomy" id="9694"/>
</organismHost>
<organismHost>
    <name type="scientific">Sus scrofa</name>
    <name type="common">Pig</name>
    <dbReference type="NCBI Taxonomy" id="9823"/>
</organismHost>
<sequence>MEDFVRQCFNPMIVELAEKTMKEYGEDPKIETNKFAAICTHLEVCFMYSDFHFIDERGESIIVESGDPNALLKHRFEIIEGRDRAMAWTVVNSICNTTGVDKPKFLPDLYDYKENRFTEIGVTRREIHIYYLEKANKIKSEKTHIHIFSFTGEEMATKADYTLDEESRARIKTRLFTIRQEMASRGLWDSFVSPREAKRQLKKDLKSQGPCVGLPTKVSHLTSPALKTLEPMWMDSNRTAALRASFLKCRKK</sequence>
<reference key="1">
    <citation type="journal article" date="1998" name="J. Virol.">
        <title>Comparisons of highly virulent H5N1 influenza A viruses isolated from humans and chickens from Hong Kong.</title>
        <authorList>
            <person name="Suarez D.L."/>
            <person name="Perdue M.L."/>
            <person name="Cox N."/>
            <person name="Rowe T."/>
            <person name="Bender C."/>
            <person name="Huang J."/>
            <person name="Swayne D.E."/>
        </authorList>
    </citation>
    <scope>NUCLEOTIDE SEQUENCE [GENOMIC RNA]</scope>
</reference>
<comment type="function">
    <text evidence="1 4">Plays a major role in the shutoff of the host protein expression by cleaving mRNAs probably via an endonuclease activity. This host shutoff allows the virus to escape from the host antiviral response (By similarity). Hijacks host RNA splicing machinery to selectively target host RNAs containing introns for destruction. This may explain the preferential degradation of RNAs that have undergone co- or post-transcriptional processing (By similarity).</text>
</comment>
<comment type="subcellular location">
    <subcellularLocation>
        <location evidence="4">Host cytoplasm</location>
    </subcellularLocation>
    <subcellularLocation>
        <location evidence="4">Host nucleus</location>
    </subcellularLocation>
</comment>
<comment type="alternative products">
    <event type="ribosomal frameshifting"/>
    <isoform>
        <id>P0CK70-1</id>
        <name>PA-X</name>
        <sequence type="displayed"/>
    </isoform>
    <isoform>
        <id>O89750-1</id>
        <name>PA</name>
        <sequence type="external"/>
    </isoform>
</comment>
<comment type="domain">
    <text evidence="1 4">The probable endonuclease active site in the N-terminus and the basic amino acid cluster in the C-terminus are important for the shutoff activity. The C-terminus acts as a nuclear localization signal (By similarity). The C-terminus is recruited to host protein complexes involved in nuclear Pol II RNA processing (By similarity).</text>
</comment>
<comment type="similarity">
    <text evidence="5">Belongs to the influenza viruses PA-X family.</text>
</comment>
<dbReference type="EMBL" id="AF046087">
    <property type="status" value="NOT_ANNOTATED_CDS"/>
    <property type="molecule type" value="Genomic_RNA"/>
</dbReference>
<dbReference type="SMR" id="P0CK70"/>
<dbReference type="GO" id="GO:0003723">
    <property type="term" value="F:RNA binding"/>
    <property type="evidence" value="ECO:0007669"/>
    <property type="project" value="InterPro"/>
</dbReference>
<dbReference type="GO" id="GO:0039694">
    <property type="term" value="P:viral RNA genome replication"/>
    <property type="evidence" value="ECO:0007669"/>
    <property type="project" value="InterPro"/>
</dbReference>
<dbReference type="GO" id="GO:0075523">
    <property type="term" value="P:viral translational frameshifting"/>
    <property type="evidence" value="ECO:0007669"/>
    <property type="project" value="UniProtKB-KW"/>
</dbReference>
<dbReference type="FunFam" id="3.40.91.90:FF:000001">
    <property type="entry name" value="Polymerase acidic protein"/>
    <property type="match status" value="1"/>
</dbReference>
<dbReference type="Gene3D" id="3.40.91.90">
    <property type="entry name" value="Influenza RNA-dependent RNA polymerase subunit PA, endonuclease domain"/>
    <property type="match status" value="1"/>
</dbReference>
<dbReference type="InterPro" id="IPR001009">
    <property type="entry name" value="PA/PA-X"/>
</dbReference>
<dbReference type="InterPro" id="IPR038372">
    <property type="entry name" value="PA/PA-X_sf"/>
</dbReference>
<dbReference type="Pfam" id="PF00603">
    <property type="entry name" value="Flu_PA"/>
    <property type="match status" value="1"/>
</dbReference>
<feature type="chain" id="PRO_0000419353" description="Protein PA-X">
    <location>
        <begin position="1"/>
        <end position="252"/>
    </location>
</feature>
<feature type="active site" evidence="2">
    <location>
        <position position="80"/>
    </location>
</feature>
<feature type="active site" evidence="2">
    <location>
        <position position="108"/>
    </location>
</feature>
<feature type="site" description="Important for efficient shutoff activity and nuclear localization" evidence="4">
    <location>
        <position position="195"/>
    </location>
</feature>
<feature type="site" description="Important for efficient shutoff activity and nuclear localization" evidence="4">
    <location>
        <position position="198"/>
    </location>
</feature>
<feature type="site" description="Important for efficient shutoff activity and nuclear localization" evidence="4">
    <location>
        <position position="199"/>
    </location>
</feature>
<feature type="site" description="Important for efficient shutoff activity" evidence="3">
    <location>
        <position position="202"/>
    </location>
</feature>
<feature type="site" description="Important for efficient shutoff activity" evidence="3">
    <location>
        <position position="203"/>
    </location>
</feature>
<feature type="site" description="Important for efficient shutoff activity" evidence="3">
    <location>
        <position position="206"/>
    </location>
</feature>
<keyword id="KW-1132">Decay of host mRNAs by virus</keyword>
<keyword id="KW-1262">Eukaryotic host gene expression shutoff by virus</keyword>
<keyword id="KW-1035">Host cytoplasm</keyword>
<keyword id="KW-1190">Host gene expression shutoff by virus</keyword>
<keyword id="KW-1192">Host mRNA suppression by virus</keyword>
<keyword id="KW-1048">Host nucleus</keyword>
<keyword id="KW-0945">Host-virus interaction</keyword>
<keyword id="KW-0688">Ribosomal frameshifting</keyword>
<organism>
    <name type="scientific">Influenza A virus (strain A/Chicken/Hong Kong/220/1997 H5N1 genotype Gs/Gd)</name>
    <dbReference type="NCBI Taxonomy" id="100834"/>
    <lineage>
        <taxon>Viruses</taxon>
        <taxon>Riboviria</taxon>
        <taxon>Orthornavirae</taxon>
        <taxon>Negarnaviricota</taxon>
        <taxon>Polyploviricotina</taxon>
        <taxon>Insthoviricetes</taxon>
        <taxon>Articulavirales</taxon>
        <taxon>Orthomyxoviridae</taxon>
        <taxon>Alphainfluenzavirus</taxon>
        <taxon>Alphainfluenzavirus influenzae</taxon>
        <taxon>Influenza A virus</taxon>
    </lineage>
</organism>
<protein>
    <recommendedName>
        <fullName>Protein PA-X</fullName>
    </recommendedName>
</protein>
<proteinExistence type="inferred from homology"/>
<accession>P0CK70</accession>
<evidence type="ECO:0000250" key="1">
    <source>
        <dbReference type="UniProtKB" id="P0CK64"/>
    </source>
</evidence>
<evidence type="ECO:0000250" key="2">
    <source>
        <dbReference type="UniProtKB" id="P0CK68"/>
    </source>
</evidence>
<evidence type="ECO:0000250" key="3">
    <source>
        <dbReference type="UniProtKB" id="P0DJW8"/>
    </source>
</evidence>
<evidence type="ECO:0000250" key="4">
    <source>
        <dbReference type="UniProtKB" id="P0DXO5"/>
    </source>
</evidence>
<evidence type="ECO:0000305" key="5"/>